<keyword id="KW-0001">2Fe-2S</keyword>
<keyword id="KW-0002">3D-structure</keyword>
<keyword id="KW-1003">Cell membrane</keyword>
<keyword id="KW-1015">Disulfide bond</keyword>
<keyword id="KW-0249">Electron transport</keyword>
<keyword id="KW-0408">Iron</keyword>
<keyword id="KW-0411">Iron-sulfur</keyword>
<keyword id="KW-0472">Membrane</keyword>
<keyword id="KW-0479">Metal-binding</keyword>
<keyword id="KW-0560">Oxidoreductase</keyword>
<keyword id="KW-1185">Reference proteome</keyword>
<keyword id="KW-0679">Respiratory chain</keyword>
<keyword id="KW-0812">Transmembrane</keyword>
<keyword id="KW-1133">Transmembrane helix</keyword>
<keyword id="KW-0813">Transport</keyword>
<evidence type="ECO:0000255" key="1"/>
<evidence type="ECO:0000255" key="2">
    <source>
        <dbReference type="PROSITE-ProRule" id="PRU00628"/>
    </source>
</evidence>
<evidence type="ECO:0000256" key="3">
    <source>
        <dbReference type="SAM" id="MobiDB-lite"/>
    </source>
</evidence>
<evidence type="ECO:0000303" key="4">
    <source>
    </source>
</evidence>
<evidence type="ECO:0000305" key="5"/>
<evidence type="ECO:0007829" key="6">
    <source>
        <dbReference type="PDB" id="7E1V"/>
    </source>
</evidence>
<evidence type="ECO:0007829" key="7">
    <source>
        <dbReference type="PDB" id="7E1W"/>
    </source>
</evidence>
<evidence type="ECO:0007829" key="8">
    <source>
        <dbReference type="PDB" id="8HCR"/>
    </source>
</evidence>
<feature type="chain" id="PRO_0000127792" description="Cytochrome bc1 complex Rieske iron-sulfur subunit">
    <location>
        <begin position="1"/>
        <end position="429"/>
    </location>
</feature>
<feature type="transmembrane region" description="Helical" evidence="1">
    <location>
        <begin position="96"/>
        <end position="116"/>
    </location>
</feature>
<feature type="transmembrane region" description="Helical" evidence="1">
    <location>
        <begin position="137"/>
        <end position="157"/>
    </location>
</feature>
<feature type="transmembrane region" description="Helical" evidence="1">
    <location>
        <begin position="207"/>
        <end position="227"/>
    </location>
</feature>
<feature type="domain" description="Rieske" evidence="2">
    <location>
        <begin position="316"/>
        <end position="410"/>
    </location>
</feature>
<feature type="region of interest" description="Disordered" evidence="3">
    <location>
        <begin position="1"/>
        <end position="45"/>
    </location>
</feature>
<feature type="binding site" evidence="2">
    <location>
        <position position="353"/>
    </location>
    <ligand>
        <name>[2Fe-2S] cluster</name>
        <dbReference type="ChEBI" id="CHEBI:190135"/>
    </ligand>
</feature>
<feature type="binding site" evidence="2">
    <location>
        <position position="355"/>
    </location>
    <ligand>
        <name>[2Fe-2S] cluster</name>
        <dbReference type="ChEBI" id="CHEBI:190135"/>
    </ligand>
</feature>
<feature type="binding site" evidence="2">
    <location>
        <position position="372"/>
    </location>
    <ligand>
        <name>[2Fe-2S] cluster</name>
        <dbReference type="ChEBI" id="CHEBI:190135"/>
    </ligand>
</feature>
<feature type="binding site" evidence="2">
    <location>
        <position position="375"/>
    </location>
    <ligand>
        <name>[2Fe-2S] cluster</name>
        <dbReference type="ChEBI" id="CHEBI:190135"/>
    </ligand>
</feature>
<feature type="disulfide bond" evidence="2">
    <location>
        <begin position="358"/>
        <end position="374"/>
    </location>
</feature>
<feature type="turn" evidence="7">
    <location>
        <begin position="53"/>
        <end position="56"/>
    </location>
</feature>
<feature type="helix" evidence="7">
    <location>
        <begin position="59"/>
        <end position="70"/>
    </location>
</feature>
<feature type="strand" evidence="7">
    <location>
        <begin position="75"/>
        <end position="78"/>
    </location>
</feature>
<feature type="strand" evidence="7">
    <location>
        <begin position="83"/>
        <end position="85"/>
    </location>
</feature>
<feature type="helix" evidence="7">
    <location>
        <begin position="87"/>
        <end position="116"/>
    </location>
</feature>
<feature type="strand" evidence="7">
    <location>
        <begin position="125"/>
        <end position="127"/>
    </location>
</feature>
<feature type="helix" evidence="7">
    <location>
        <begin position="132"/>
        <end position="134"/>
    </location>
</feature>
<feature type="helix" evidence="7">
    <location>
        <begin position="135"/>
        <end position="160"/>
    </location>
</feature>
<feature type="strand" evidence="7">
    <location>
        <begin position="164"/>
        <end position="168"/>
    </location>
</feature>
<feature type="helix" evidence="7">
    <location>
        <begin position="178"/>
        <end position="194"/>
    </location>
</feature>
<feature type="helix" evidence="7">
    <location>
        <begin position="197"/>
        <end position="199"/>
    </location>
</feature>
<feature type="helix" evidence="7">
    <location>
        <begin position="201"/>
        <end position="222"/>
    </location>
</feature>
<feature type="strand" evidence="7">
    <location>
        <begin position="223"/>
        <end position="226"/>
    </location>
</feature>
<feature type="strand" evidence="7">
    <location>
        <begin position="235"/>
        <end position="237"/>
    </location>
</feature>
<feature type="strand" evidence="7">
    <location>
        <begin position="240"/>
        <end position="242"/>
    </location>
</feature>
<feature type="helix" evidence="7">
    <location>
        <begin position="244"/>
        <end position="246"/>
    </location>
</feature>
<feature type="strand" evidence="7">
    <location>
        <begin position="249"/>
        <end position="251"/>
    </location>
</feature>
<feature type="strand" evidence="7">
    <location>
        <begin position="253"/>
        <end position="256"/>
    </location>
</feature>
<feature type="strand" evidence="7">
    <location>
        <begin position="260"/>
        <end position="264"/>
    </location>
</feature>
<feature type="strand" evidence="8">
    <location>
        <begin position="268"/>
        <end position="270"/>
    </location>
</feature>
<feature type="strand" evidence="7">
    <location>
        <begin position="272"/>
        <end position="274"/>
    </location>
</feature>
<feature type="strand" evidence="7">
    <location>
        <begin position="286"/>
        <end position="291"/>
    </location>
</feature>
<feature type="helix" evidence="7">
    <location>
        <begin position="294"/>
        <end position="296"/>
    </location>
</feature>
<feature type="strand" evidence="6">
    <location>
        <begin position="299"/>
        <end position="301"/>
    </location>
</feature>
<feature type="helix" evidence="7">
    <location>
        <begin position="302"/>
        <end position="312"/>
    </location>
</feature>
<feature type="strand" evidence="7">
    <location>
        <begin position="319"/>
        <end position="323"/>
    </location>
</feature>
<feature type="turn" evidence="7">
    <location>
        <begin position="326"/>
        <end position="328"/>
    </location>
</feature>
<feature type="strand" evidence="6">
    <location>
        <begin position="329"/>
        <end position="331"/>
    </location>
</feature>
<feature type="turn" evidence="8">
    <location>
        <begin position="339"/>
        <end position="341"/>
    </location>
</feature>
<feature type="strand" evidence="7">
    <location>
        <begin position="349"/>
        <end position="352"/>
    </location>
</feature>
<feature type="turn" evidence="7">
    <location>
        <begin position="354"/>
        <end position="356"/>
    </location>
</feature>
<feature type="strand" evidence="7">
    <location>
        <begin position="362"/>
        <end position="364"/>
    </location>
</feature>
<feature type="turn" evidence="7">
    <location>
        <begin position="365"/>
        <end position="368"/>
    </location>
</feature>
<feature type="strand" evidence="7">
    <location>
        <begin position="369"/>
        <end position="371"/>
    </location>
</feature>
<feature type="turn" evidence="7">
    <location>
        <begin position="373"/>
        <end position="375"/>
    </location>
</feature>
<feature type="strand" evidence="7">
    <location>
        <begin position="378"/>
        <end position="380"/>
    </location>
</feature>
<feature type="turn" evidence="7">
    <location>
        <begin position="381"/>
        <end position="385"/>
    </location>
</feature>
<feature type="strand" evidence="7">
    <location>
        <begin position="387"/>
        <end position="391"/>
    </location>
</feature>
<feature type="strand" evidence="7">
    <location>
        <begin position="401"/>
        <end position="403"/>
    </location>
</feature>
<feature type="strand" evidence="7">
    <location>
        <begin position="409"/>
        <end position="411"/>
    </location>
</feature>
<name>QCRA_MYCTU</name>
<reference key="1">
    <citation type="journal article" date="1998" name="Nature">
        <title>Deciphering the biology of Mycobacterium tuberculosis from the complete genome sequence.</title>
        <authorList>
            <person name="Cole S.T."/>
            <person name="Brosch R."/>
            <person name="Parkhill J."/>
            <person name="Garnier T."/>
            <person name="Churcher C.M."/>
            <person name="Harris D.E."/>
            <person name="Gordon S.V."/>
            <person name="Eiglmeier K."/>
            <person name="Gas S."/>
            <person name="Barry C.E. III"/>
            <person name="Tekaia F."/>
            <person name="Badcock K."/>
            <person name="Basham D."/>
            <person name="Brown D."/>
            <person name="Chillingworth T."/>
            <person name="Connor R."/>
            <person name="Davies R.M."/>
            <person name="Devlin K."/>
            <person name="Feltwell T."/>
            <person name="Gentles S."/>
            <person name="Hamlin N."/>
            <person name="Holroyd S."/>
            <person name="Hornsby T."/>
            <person name="Jagels K."/>
            <person name="Krogh A."/>
            <person name="McLean J."/>
            <person name="Moule S."/>
            <person name="Murphy L.D."/>
            <person name="Oliver S."/>
            <person name="Osborne J."/>
            <person name="Quail M.A."/>
            <person name="Rajandream M.A."/>
            <person name="Rogers J."/>
            <person name="Rutter S."/>
            <person name="Seeger K."/>
            <person name="Skelton S."/>
            <person name="Squares S."/>
            <person name="Squares R."/>
            <person name="Sulston J.E."/>
            <person name="Taylor K."/>
            <person name="Whitehead S."/>
            <person name="Barrell B.G."/>
        </authorList>
    </citation>
    <scope>NUCLEOTIDE SEQUENCE [LARGE SCALE GENOMIC DNA]</scope>
    <source>
        <strain>ATCC 25618 / H37Rv</strain>
    </source>
</reference>
<reference key="2">
    <citation type="journal article" date="2008" name="BMC Syst. Biol.">
        <title>targetTB: a target identification pipeline for Mycobacterium tuberculosis through an interactome, reactome and genome-scale structural analysis.</title>
        <authorList>
            <person name="Raman K."/>
            <person name="Yeturu K."/>
            <person name="Chandra N."/>
        </authorList>
    </citation>
    <scope>IDENTIFICATION AS A DRUG TARGET [LARGE SCALE ANALYSIS]</scope>
</reference>
<reference key="3">
    <citation type="journal article" date="2011" name="Mol. Cell. Proteomics">
        <title>Proteogenomic analysis of Mycobacterium tuberculosis by high resolution mass spectrometry.</title>
        <authorList>
            <person name="Kelkar D.S."/>
            <person name="Kumar D."/>
            <person name="Kumar P."/>
            <person name="Balakrishnan L."/>
            <person name="Muthusamy B."/>
            <person name="Yadav A.K."/>
            <person name="Shrivastava P."/>
            <person name="Marimuthu A."/>
            <person name="Anand S."/>
            <person name="Sundaram H."/>
            <person name="Kingsbury R."/>
            <person name="Harsha H.C."/>
            <person name="Nair B."/>
            <person name="Prasad T.S."/>
            <person name="Chauhan D.S."/>
            <person name="Katoch K."/>
            <person name="Katoch V.M."/>
            <person name="Kumar P."/>
            <person name="Chaerkady R."/>
            <person name="Ramachandran S."/>
            <person name="Dash D."/>
            <person name="Pandey A."/>
        </authorList>
    </citation>
    <scope>IDENTIFICATION BY MASS SPECTROMETRY [LARGE SCALE ANALYSIS]</scope>
    <source>
        <strain>ATCC 25618 / H37Rv</strain>
    </source>
</reference>
<accession>P9WH23</accession>
<accession>L0TBK9</accession>
<accession>Q10387</accession>
<organism>
    <name type="scientific">Mycobacterium tuberculosis (strain ATCC 25618 / H37Rv)</name>
    <dbReference type="NCBI Taxonomy" id="83332"/>
    <lineage>
        <taxon>Bacteria</taxon>
        <taxon>Bacillati</taxon>
        <taxon>Actinomycetota</taxon>
        <taxon>Actinomycetes</taxon>
        <taxon>Mycobacteriales</taxon>
        <taxon>Mycobacteriaceae</taxon>
        <taxon>Mycobacterium</taxon>
        <taxon>Mycobacterium tuberculosis complex</taxon>
    </lineage>
</organism>
<dbReference type="EMBL" id="AL123456">
    <property type="protein sequence ID" value="CCP44972.1"/>
    <property type="molecule type" value="Genomic_DNA"/>
</dbReference>
<dbReference type="PIR" id="D70784">
    <property type="entry name" value="D70784"/>
</dbReference>
<dbReference type="RefSeq" id="NP_216711.1">
    <property type="nucleotide sequence ID" value="NC_000962.3"/>
</dbReference>
<dbReference type="RefSeq" id="WP_003411396.1">
    <property type="nucleotide sequence ID" value="NC_000962.3"/>
</dbReference>
<dbReference type="PDB" id="7E1V">
    <property type="method" value="EM"/>
    <property type="resolution" value="2.68 A"/>
    <property type="chains" value="A/M=1-429"/>
</dbReference>
<dbReference type="PDB" id="7E1W">
    <property type="method" value="EM"/>
    <property type="resolution" value="2.67 A"/>
    <property type="chains" value="A/M=1-429"/>
</dbReference>
<dbReference type="PDB" id="7E1X">
    <property type="method" value="EM"/>
    <property type="resolution" value="2.93 A"/>
    <property type="chains" value="A/M=1-429"/>
</dbReference>
<dbReference type="PDB" id="8HCR">
    <property type="method" value="EM"/>
    <property type="chains" value="A/M=1-429"/>
</dbReference>
<dbReference type="PDBsum" id="7E1V"/>
<dbReference type="PDBsum" id="7E1W"/>
<dbReference type="PDBsum" id="7E1X"/>
<dbReference type="PDBsum" id="8HCR"/>
<dbReference type="EMDB" id="EMD-30943"/>
<dbReference type="EMDB" id="EMD-30944"/>
<dbReference type="EMDB" id="EMD-30945"/>
<dbReference type="SMR" id="P9WH23"/>
<dbReference type="FunCoup" id="P9WH23">
    <property type="interactions" value="47"/>
</dbReference>
<dbReference type="STRING" id="83332.Rv2195"/>
<dbReference type="PaxDb" id="83332-Rv2195"/>
<dbReference type="DNASU" id="888420"/>
<dbReference type="GeneID" id="888420"/>
<dbReference type="KEGG" id="mtu:Rv2195"/>
<dbReference type="KEGG" id="mtv:RVBD_2195"/>
<dbReference type="PATRIC" id="fig|83332.111.peg.2442"/>
<dbReference type="TubercuList" id="Rv2195"/>
<dbReference type="eggNOG" id="COG0723">
    <property type="taxonomic scope" value="Bacteria"/>
</dbReference>
<dbReference type="InParanoid" id="P9WH23"/>
<dbReference type="OrthoDB" id="9802613at2"/>
<dbReference type="PhylomeDB" id="P9WH23"/>
<dbReference type="Proteomes" id="UP000001584">
    <property type="component" value="Chromosome"/>
</dbReference>
<dbReference type="GO" id="GO:0009274">
    <property type="term" value="C:peptidoglycan-based cell wall"/>
    <property type="evidence" value="ECO:0007005"/>
    <property type="project" value="MTBBASE"/>
</dbReference>
<dbReference type="GO" id="GO:0005886">
    <property type="term" value="C:plasma membrane"/>
    <property type="evidence" value="ECO:0007005"/>
    <property type="project" value="MTBBASE"/>
</dbReference>
<dbReference type="GO" id="GO:0051537">
    <property type="term" value="F:2 iron, 2 sulfur cluster binding"/>
    <property type="evidence" value="ECO:0007669"/>
    <property type="project" value="UniProtKB-KW"/>
</dbReference>
<dbReference type="GO" id="GO:0046872">
    <property type="term" value="F:metal ion binding"/>
    <property type="evidence" value="ECO:0007669"/>
    <property type="project" value="UniProtKB-KW"/>
</dbReference>
<dbReference type="GO" id="GO:0004497">
    <property type="term" value="F:monooxygenase activity"/>
    <property type="evidence" value="ECO:0007669"/>
    <property type="project" value="UniProtKB-ARBA"/>
</dbReference>
<dbReference type="GO" id="GO:0016491">
    <property type="term" value="F:oxidoreductase activity"/>
    <property type="evidence" value="ECO:0000318"/>
    <property type="project" value="GO_Central"/>
</dbReference>
<dbReference type="GO" id="GO:0016705">
    <property type="term" value="F:oxidoreductase activity, acting on paired donors, with incorporation or reduction of molecular oxygen"/>
    <property type="evidence" value="ECO:0007669"/>
    <property type="project" value="UniProtKB-ARBA"/>
</dbReference>
<dbReference type="CDD" id="cd03467">
    <property type="entry name" value="Rieske"/>
    <property type="match status" value="1"/>
</dbReference>
<dbReference type="FunFam" id="2.102.10.10:FF:000010">
    <property type="entry name" value="Ubiquinol-cytochrome c reductase iron-sulfur subunit"/>
    <property type="match status" value="1"/>
</dbReference>
<dbReference type="Gene3D" id="2.102.10.10">
    <property type="entry name" value="Rieske [2Fe-2S] iron-sulphur domain"/>
    <property type="match status" value="1"/>
</dbReference>
<dbReference type="InterPro" id="IPR045603">
    <property type="entry name" value="QcrA_N"/>
</dbReference>
<dbReference type="InterPro" id="IPR017941">
    <property type="entry name" value="Rieske_2Fe-2S"/>
</dbReference>
<dbReference type="InterPro" id="IPR036922">
    <property type="entry name" value="Rieske_2Fe-2S_sf"/>
</dbReference>
<dbReference type="InterPro" id="IPR014349">
    <property type="entry name" value="Rieske_Fe-S_prot"/>
</dbReference>
<dbReference type="PANTHER" id="PTHR10134">
    <property type="entry name" value="CYTOCHROME B-C1 COMPLEX SUBUNIT RIESKE, MITOCHONDRIAL"/>
    <property type="match status" value="1"/>
</dbReference>
<dbReference type="Pfam" id="PF19297">
    <property type="entry name" value="QcrA_N"/>
    <property type="match status" value="1"/>
</dbReference>
<dbReference type="Pfam" id="PF00355">
    <property type="entry name" value="Rieske"/>
    <property type="match status" value="1"/>
</dbReference>
<dbReference type="SUPFAM" id="SSF50022">
    <property type="entry name" value="ISP domain"/>
    <property type="match status" value="1"/>
</dbReference>
<dbReference type="PROSITE" id="PS51296">
    <property type="entry name" value="RIESKE"/>
    <property type="match status" value="1"/>
</dbReference>
<proteinExistence type="evidence at protein level"/>
<gene>
    <name type="primary">qcrA</name>
    <name type="ordered locus">Rv2195</name>
    <name type="ORF">MTCY190.06</name>
</gene>
<protein>
    <recommendedName>
        <fullName>Cytochrome bc1 complex Rieske iron-sulfur subunit</fullName>
    </recommendedName>
    <alternativeName>
        <fullName>Cytochrome bc1 reductase complex subunit QcrA</fullName>
    </alternativeName>
    <alternativeName>
        <fullName>Rieske iron-sulfur protein</fullName>
    </alternativeName>
    <alternativeName>
        <fullName>Ubiquinol--cytochrome c reductase iron-sulfur subunit</fullName>
    </alternativeName>
</protein>
<comment type="function">
    <text evidence="5">Iron-sulfur subunit of the cytochrome bc1 complex, an essential component of the respiratory electron transport chain required for ATP synthesis. The bc1 complex catalyzes the oxidation of menaquinol and the reduction of cytochrome c in the respiratory chain. The bc1 complex operates through a Q-cycle mechanism that couples electron transfer to generation of the proton gradient that drives ATP synthesis.</text>
</comment>
<comment type="cofactor">
    <cofactor evidence="2">
        <name>[2Fe-2S] cluster</name>
        <dbReference type="ChEBI" id="CHEBI:190135"/>
    </cofactor>
    <text evidence="2">Binds 1 [2Fe-2S] cluster per subunit.</text>
</comment>
<comment type="subunit">
    <text evidence="5">The cytochrome bc1 complex is composed of a cytochrome b (QcrB), the Rieske iron-sulfur protein (QcrA) and a diheme cytochrome c (QcrC) subunit.</text>
</comment>
<comment type="subcellular location">
    <subcellularLocation>
        <location evidence="1">Cell membrane</location>
        <topology evidence="1">Multi-pass membrane protein</topology>
    </subcellularLocation>
</comment>
<comment type="miscellaneous">
    <text evidence="4">Was identified as a high-confidence drug target.</text>
</comment>
<comment type="similarity">
    <text evidence="5">Belongs to the Rieske iron-sulfur protein family.</text>
</comment>
<sequence length="429" mass="46923">MSRADDDAVGVPPTCGGRSDEEERRIVPGPNPQDGAKDGAKATAVPREPDEAALAAMSNQELLALGGKLDGVRIAYKEPRWPVEGTKAEKRAERSVAVWLLLGGVFGLALLLIFLFWPWEFKAADGESDFIYSLTTPLYGLTFGLSILSIAIGAVLYQKRFIPEEISIQERHDGASREIDRKTVVANLTDAFEGSTIRRRKLIGLSFGVGMGAFGLGTLVAFAGGLIKNPWKPVVPTAEGKKAVLWTSGWTPRYQGETIYLARATGTEDGPPFIKMRPEDMDAGGMETVFPWRESDGDGTTVESHHKLQEIAMGIRNPVMLIRIKPSDLGRVVKRKGQESFNFGEFFAFTKVCSHLGCPSSLYEQQSYRILCPCHQSQFDALHFAKPIFGPAARALAQLPITIDTDGYLVANGDFVEPVGPAFWERTTT</sequence>